<gene>
    <name evidence="1" type="primary">rpsK</name>
    <name type="ordered locus">SbBS512_E3683</name>
</gene>
<name>RS11_SHIB3</name>
<proteinExistence type="inferred from homology"/>
<evidence type="ECO:0000255" key="1">
    <source>
        <dbReference type="HAMAP-Rule" id="MF_01310"/>
    </source>
</evidence>
<evidence type="ECO:0000305" key="2"/>
<accession>B2U2R6</accession>
<dbReference type="EMBL" id="CP001063">
    <property type="protein sequence ID" value="ACD06355.1"/>
    <property type="molecule type" value="Genomic_DNA"/>
</dbReference>
<dbReference type="RefSeq" id="WP_001029684.1">
    <property type="nucleotide sequence ID" value="NC_010658.1"/>
</dbReference>
<dbReference type="SMR" id="B2U2R6"/>
<dbReference type="STRING" id="344609.SbBS512_E3683"/>
<dbReference type="GeneID" id="93778690"/>
<dbReference type="KEGG" id="sbc:SbBS512_E3683"/>
<dbReference type="HOGENOM" id="CLU_072439_5_0_6"/>
<dbReference type="Proteomes" id="UP000001030">
    <property type="component" value="Chromosome"/>
</dbReference>
<dbReference type="GO" id="GO:1990904">
    <property type="term" value="C:ribonucleoprotein complex"/>
    <property type="evidence" value="ECO:0007669"/>
    <property type="project" value="UniProtKB-KW"/>
</dbReference>
<dbReference type="GO" id="GO:0005840">
    <property type="term" value="C:ribosome"/>
    <property type="evidence" value="ECO:0007669"/>
    <property type="project" value="UniProtKB-KW"/>
</dbReference>
<dbReference type="GO" id="GO:0019843">
    <property type="term" value="F:rRNA binding"/>
    <property type="evidence" value="ECO:0007669"/>
    <property type="project" value="UniProtKB-UniRule"/>
</dbReference>
<dbReference type="GO" id="GO:0003735">
    <property type="term" value="F:structural constituent of ribosome"/>
    <property type="evidence" value="ECO:0007669"/>
    <property type="project" value="InterPro"/>
</dbReference>
<dbReference type="GO" id="GO:0006412">
    <property type="term" value="P:translation"/>
    <property type="evidence" value="ECO:0007669"/>
    <property type="project" value="UniProtKB-UniRule"/>
</dbReference>
<dbReference type="FunFam" id="3.30.420.80:FF:000001">
    <property type="entry name" value="30S ribosomal protein S11"/>
    <property type="match status" value="1"/>
</dbReference>
<dbReference type="Gene3D" id="3.30.420.80">
    <property type="entry name" value="Ribosomal protein S11"/>
    <property type="match status" value="1"/>
</dbReference>
<dbReference type="HAMAP" id="MF_01310">
    <property type="entry name" value="Ribosomal_uS11"/>
    <property type="match status" value="1"/>
</dbReference>
<dbReference type="InterPro" id="IPR001971">
    <property type="entry name" value="Ribosomal_uS11"/>
</dbReference>
<dbReference type="InterPro" id="IPR019981">
    <property type="entry name" value="Ribosomal_uS11_bac-type"/>
</dbReference>
<dbReference type="InterPro" id="IPR018102">
    <property type="entry name" value="Ribosomal_uS11_CS"/>
</dbReference>
<dbReference type="InterPro" id="IPR036967">
    <property type="entry name" value="Ribosomal_uS11_sf"/>
</dbReference>
<dbReference type="NCBIfam" id="NF003698">
    <property type="entry name" value="PRK05309.1"/>
    <property type="match status" value="1"/>
</dbReference>
<dbReference type="NCBIfam" id="TIGR03632">
    <property type="entry name" value="uS11_bact"/>
    <property type="match status" value="1"/>
</dbReference>
<dbReference type="PANTHER" id="PTHR11759">
    <property type="entry name" value="40S RIBOSOMAL PROTEIN S14/30S RIBOSOMAL PROTEIN S11"/>
    <property type="match status" value="1"/>
</dbReference>
<dbReference type="Pfam" id="PF00411">
    <property type="entry name" value="Ribosomal_S11"/>
    <property type="match status" value="1"/>
</dbReference>
<dbReference type="PIRSF" id="PIRSF002131">
    <property type="entry name" value="Ribosomal_S11"/>
    <property type="match status" value="1"/>
</dbReference>
<dbReference type="SUPFAM" id="SSF53137">
    <property type="entry name" value="Translational machinery components"/>
    <property type="match status" value="1"/>
</dbReference>
<dbReference type="PROSITE" id="PS00054">
    <property type="entry name" value="RIBOSOMAL_S11"/>
    <property type="match status" value="1"/>
</dbReference>
<comment type="function">
    <text evidence="1">Located on the platform of the 30S subunit, it bridges several disparate RNA helices of the 16S rRNA. Forms part of the Shine-Dalgarno cleft in the 70S ribosome.</text>
</comment>
<comment type="subunit">
    <text evidence="1">Part of the 30S ribosomal subunit. Interacts with proteins S7 and S18. Binds to IF-3.</text>
</comment>
<comment type="similarity">
    <text evidence="1">Belongs to the universal ribosomal protein uS11 family.</text>
</comment>
<protein>
    <recommendedName>
        <fullName evidence="1">Small ribosomal subunit protein uS11</fullName>
    </recommendedName>
    <alternativeName>
        <fullName evidence="2">30S ribosomal protein S11</fullName>
    </alternativeName>
</protein>
<sequence>MAKAPIRARKRVRKQVSDGVAHIHASFNNTIVTITDRQGNALGWATAGGSGFRGSRKSTPFAAQVAAERCADAVKEYGIKNLEVMVKGPGPGRESTIRALNAAGFRITNITDVTPIPHNGCRPPKKRRV</sequence>
<keyword id="KW-1185">Reference proteome</keyword>
<keyword id="KW-0687">Ribonucleoprotein</keyword>
<keyword id="KW-0689">Ribosomal protein</keyword>
<keyword id="KW-0694">RNA-binding</keyword>
<keyword id="KW-0699">rRNA-binding</keyword>
<reference key="1">
    <citation type="submission" date="2008-05" db="EMBL/GenBank/DDBJ databases">
        <title>Complete sequence of Shigella boydii serotype 18 strain BS512.</title>
        <authorList>
            <person name="Rasko D.A."/>
            <person name="Rosovitz M."/>
            <person name="Maurelli A.T."/>
            <person name="Myers G."/>
            <person name="Seshadri R."/>
            <person name="Cer R."/>
            <person name="Jiang L."/>
            <person name="Ravel J."/>
            <person name="Sebastian Y."/>
        </authorList>
    </citation>
    <scope>NUCLEOTIDE SEQUENCE [LARGE SCALE GENOMIC DNA]</scope>
    <source>
        <strain>CDC 3083-94 / BS512</strain>
    </source>
</reference>
<feature type="chain" id="PRO_1000141141" description="Small ribosomal subunit protein uS11">
    <location>
        <begin position="1"/>
        <end position="129"/>
    </location>
</feature>
<organism>
    <name type="scientific">Shigella boydii serotype 18 (strain CDC 3083-94 / BS512)</name>
    <dbReference type="NCBI Taxonomy" id="344609"/>
    <lineage>
        <taxon>Bacteria</taxon>
        <taxon>Pseudomonadati</taxon>
        <taxon>Pseudomonadota</taxon>
        <taxon>Gammaproteobacteria</taxon>
        <taxon>Enterobacterales</taxon>
        <taxon>Enterobacteriaceae</taxon>
        <taxon>Shigella</taxon>
    </lineage>
</organism>